<keyword id="KW-0963">Cytoplasm</keyword>
<keyword id="KW-1017">Isopeptide bond</keyword>
<keyword id="KW-0539">Nucleus</keyword>
<keyword id="KW-1185">Reference proteome</keyword>
<keyword id="KW-0832">Ubl conjugation</keyword>
<keyword id="KW-0833">Ubl conjugation pathway</keyword>
<sequence>MSKVTFKITLTSDPKLPFRVINVTEDTPFTAVLRFACEQFNVPWQTSAIITNDGIGINPAQTSGNIFLKNGSDLRLIPRDRVGGL</sequence>
<proteinExistence type="inferred from homology"/>
<reference key="1">
    <citation type="journal article" date="2005" name="Nature">
        <title>The genome of the social amoeba Dictyostelium discoideum.</title>
        <authorList>
            <person name="Eichinger L."/>
            <person name="Pachebat J.A."/>
            <person name="Gloeckner G."/>
            <person name="Rajandream M.A."/>
            <person name="Sucgang R."/>
            <person name="Berriman M."/>
            <person name="Song J."/>
            <person name="Olsen R."/>
            <person name="Szafranski K."/>
            <person name="Xu Q."/>
            <person name="Tunggal B."/>
            <person name="Kummerfeld S."/>
            <person name="Madera M."/>
            <person name="Konfortov B.A."/>
            <person name="Rivero F."/>
            <person name="Bankier A.T."/>
            <person name="Lehmann R."/>
            <person name="Hamlin N."/>
            <person name="Davies R."/>
            <person name="Gaudet P."/>
            <person name="Fey P."/>
            <person name="Pilcher K."/>
            <person name="Chen G."/>
            <person name="Saunders D."/>
            <person name="Sodergren E.J."/>
            <person name="Davis P."/>
            <person name="Kerhornou A."/>
            <person name="Nie X."/>
            <person name="Hall N."/>
            <person name="Anjard C."/>
            <person name="Hemphill L."/>
            <person name="Bason N."/>
            <person name="Farbrother P."/>
            <person name="Desany B."/>
            <person name="Just E."/>
            <person name="Morio T."/>
            <person name="Rost R."/>
            <person name="Churcher C.M."/>
            <person name="Cooper J."/>
            <person name="Haydock S."/>
            <person name="van Driessche N."/>
            <person name="Cronin A."/>
            <person name="Goodhead I."/>
            <person name="Muzny D.M."/>
            <person name="Mourier T."/>
            <person name="Pain A."/>
            <person name="Lu M."/>
            <person name="Harper D."/>
            <person name="Lindsay R."/>
            <person name="Hauser H."/>
            <person name="James K.D."/>
            <person name="Quiles M."/>
            <person name="Madan Babu M."/>
            <person name="Saito T."/>
            <person name="Buchrieser C."/>
            <person name="Wardroper A."/>
            <person name="Felder M."/>
            <person name="Thangavelu M."/>
            <person name="Johnson D."/>
            <person name="Knights A."/>
            <person name="Loulseged H."/>
            <person name="Mungall K.L."/>
            <person name="Oliver K."/>
            <person name="Price C."/>
            <person name="Quail M.A."/>
            <person name="Urushihara H."/>
            <person name="Hernandez J."/>
            <person name="Rabbinowitsch E."/>
            <person name="Steffen D."/>
            <person name="Sanders M."/>
            <person name="Ma J."/>
            <person name="Kohara Y."/>
            <person name="Sharp S."/>
            <person name="Simmonds M.N."/>
            <person name="Spiegler S."/>
            <person name="Tivey A."/>
            <person name="Sugano S."/>
            <person name="White B."/>
            <person name="Walker D."/>
            <person name="Woodward J.R."/>
            <person name="Winckler T."/>
            <person name="Tanaka Y."/>
            <person name="Shaulsky G."/>
            <person name="Schleicher M."/>
            <person name="Weinstock G.M."/>
            <person name="Rosenthal A."/>
            <person name="Cox E.C."/>
            <person name="Chisholm R.L."/>
            <person name="Gibbs R.A."/>
            <person name="Loomis W.F."/>
            <person name="Platzer M."/>
            <person name="Kay R.R."/>
            <person name="Williams J.G."/>
            <person name="Dear P.H."/>
            <person name="Noegel A.A."/>
            <person name="Barrell B.G."/>
            <person name="Kuspa A."/>
        </authorList>
    </citation>
    <scope>NUCLEOTIDE SEQUENCE [LARGE SCALE GENOMIC DNA]</scope>
    <source>
        <strain>AX4</strain>
    </source>
</reference>
<organism>
    <name type="scientific">Dictyostelium discoideum</name>
    <name type="common">Social amoeba</name>
    <dbReference type="NCBI Taxonomy" id="44689"/>
    <lineage>
        <taxon>Eukaryota</taxon>
        <taxon>Amoebozoa</taxon>
        <taxon>Evosea</taxon>
        <taxon>Eumycetozoa</taxon>
        <taxon>Dictyostelia</taxon>
        <taxon>Dictyosteliales</taxon>
        <taxon>Dictyosteliaceae</taxon>
        <taxon>Dictyostelium</taxon>
    </lineage>
</organism>
<accession>B0G186</accession>
<feature type="chain" id="PRO_0000329966" description="Ubiquitin-fold modifier 1">
    <location>
        <begin position="1"/>
        <end position="83"/>
    </location>
</feature>
<feature type="propeptide" id="PRO_0000329967" description="Removed in mature form" evidence="1">
    <location>
        <begin position="84"/>
        <end position="85"/>
    </location>
</feature>
<feature type="cross-link" description="Glycyl lysine isopeptide (Lys-Gly) (interchain with G-Cter in UFM1)" evidence="1">
    <location>
        <position position="69"/>
    </location>
</feature>
<feature type="cross-link" description="Glycyl lysine isopeptide (Gly-Lys) (interchain with K-? in acceptor proteins)" evidence="1">
    <location>
        <position position="83"/>
    </location>
</feature>
<gene>
    <name type="primary">ufm1</name>
    <name type="ORF">DDB_G0295709</name>
</gene>
<name>UFM1_DICDI</name>
<evidence type="ECO:0000250" key="1">
    <source>
        <dbReference type="UniProtKB" id="P61960"/>
    </source>
</evidence>
<evidence type="ECO:0000250" key="2">
    <source>
        <dbReference type="UniProtKB" id="P61961"/>
    </source>
</evidence>
<evidence type="ECO:0000305" key="3"/>
<protein>
    <recommendedName>
        <fullName>Ubiquitin-fold modifier 1</fullName>
    </recommendedName>
</protein>
<comment type="function">
    <text evidence="1 2">Ubiquitin-like modifier which can be covalently attached to substrate proteins as a monomer or a lysine-linked polymer in a post-translational process called ufmylation. Ufmylation on lysine residues of proteins may play a crucial role in a number of cellular processes.</text>
</comment>
<comment type="subcellular location">
    <subcellularLocation>
        <location evidence="1">Nucleus</location>
    </subcellularLocation>
    <subcellularLocation>
        <location evidence="1">Cytoplasm</location>
    </subcellularLocation>
</comment>
<comment type="similarity">
    <text evidence="3">Belongs to the UFM1 family.</text>
</comment>
<dbReference type="EMBL" id="AAFI02000179">
    <property type="protein sequence ID" value="EDR41022.1"/>
    <property type="molecule type" value="Genomic_DNA"/>
</dbReference>
<dbReference type="RefSeq" id="XP_001733049.1">
    <property type="nucleotide sequence ID" value="XM_001732997.1"/>
</dbReference>
<dbReference type="SMR" id="B0G186"/>
<dbReference type="FunCoup" id="B0G186">
    <property type="interactions" value="335"/>
</dbReference>
<dbReference type="STRING" id="44689.B0G186"/>
<dbReference type="PaxDb" id="44689-DDB0252554"/>
<dbReference type="EnsemblProtists" id="EDR41022">
    <property type="protein sequence ID" value="EDR41022"/>
    <property type="gene ID" value="DDB_G0295709"/>
</dbReference>
<dbReference type="GeneID" id="8628285"/>
<dbReference type="KEGG" id="ddi:DDB_G0295709"/>
<dbReference type="dictyBase" id="DDB_G0295709">
    <property type="gene designation" value="ufm1"/>
</dbReference>
<dbReference type="VEuPathDB" id="AmoebaDB:DDB_G0295709"/>
<dbReference type="eggNOG" id="KOG3483">
    <property type="taxonomic scope" value="Eukaryota"/>
</dbReference>
<dbReference type="HOGENOM" id="CLU_175114_0_0_1"/>
<dbReference type="InParanoid" id="B0G186"/>
<dbReference type="OMA" id="MEHAVGK"/>
<dbReference type="PhylomeDB" id="B0G186"/>
<dbReference type="PRO" id="PR:B0G186"/>
<dbReference type="Proteomes" id="UP000002195">
    <property type="component" value="Chromosome 6"/>
</dbReference>
<dbReference type="GO" id="GO:0005737">
    <property type="term" value="C:cytoplasm"/>
    <property type="evidence" value="ECO:0000250"/>
    <property type="project" value="UniProtKB"/>
</dbReference>
<dbReference type="GO" id="GO:0005634">
    <property type="term" value="C:nucleus"/>
    <property type="evidence" value="ECO:0000250"/>
    <property type="project" value="UniProtKB"/>
</dbReference>
<dbReference type="GO" id="GO:1990592">
    <property type="term" value="P:protein K69-linked ufmylation"/>
    <property type="evidence" value="ECO:0000250"/>
    <property type="project" value="UniProtKB"/>
</dbReference>
<dbReference type="GO" id="GO:0034976">
    <property type="term" value="P:response to endoplasmic reticulum stress"/>
    <property type="evidence" value="ECO:0000318"/>
    <property type="project" value="GO_Central"/>
</dbReference>
<dbReference type="GO" id="GO:0061709">
    <property type="term" value="P:reticulophagy"/>
    <property type="evidence" value="ECO:0000318"/>
    <property type="project" value="GO_Central"/>
</dbReference>
<dbReference type="CDD" id="cd01766">
    <property type="entry name" value="Ubl_UFM1"/>
    <property type="match status" value="1"/>
</dbReference>
<dbReference type="FunFam" id="3.10.20.90:FF:000044">
    <property type="entry name" value="Ubiquitin-fold modifier 1"/>
    <property type="match status" value="1"/>
</dbReference>
<dbReference type="Gene3D" id="3.10.20.90">
    <property type="entry name" value="Phosphatidylinositol 3-kinase Catalytic Subunit, Chain A, domain 1"/>
    <property type="match status" value="1"/>
</dbReference>
<dbReference type="InterPro" id="IPR029071">
    <property type="entry name" value="Ubiquitin-like_domsf"/>
</dbReference>
<dbReference type="InterPro" id="IPR005375">
    <property type="entry name" value="UFM1"/>
</dbReference>
<dbReference type="PANTHER" id="PTHR15825">
    <property type="entry name" value="UBIQUITIN-FOLD MODIFIER 1"/>
    <property type="match status" value="1"/>
</dbReference>
<dbReference type="PANTHER" id="PTHR15825:SF0">
    <property type="entry name" value="UBIQUITIN-FOLD MODIFIER 1"/>
    <property type="match status" value="1"/>
</dbReference>
<dbReference type="Pfam" id="PF03671">
    <property type="entry name" value="Ufm1"/>
    <property type="match status" value="1"/>
</dbReference>
<dbReference type="SUPFAM" id="SSF54236">
    <property type="entry name" value="Ubiquitin-like"/>
    <property type="match status" value="1"/>
</dbReference>